<keyword id="KW-1185">Reference proteome</keyword>
<keyword id="KW-0694">RNA-binding</keyword>
<keyword id="KW-0804">Transcription</keyword>
<keyword id="KW-0889">Transcription antitermination</keyword>
<keyword id="KW-0805">Transcription regulation</keyword>
<dbReference type="EMBL" id="CP000885">
    <property type="protein sequence ID" value="ABX42876.1"/>
    <property type="molecule type" value="Genomic_DNA"/>
</dbReference>
<dbReference type="RefSeq" id="WP_012200529.1">
    <property type="nucleotide sequence ID" value="NC_010001.1"/>
</dbReference>
<dbReference type="SMR" id="A9KMC2"/>
<dbReference type="STRING" id="357809.Cphy_2515"/>
<dbReference type="KEGG" id="cpy:Cphy_2515"/>
<dbReference type="eggNOG" id="COG0781">
    <property type="taxonomic scope" value="Bacteria"/>
</dbReference>
<dbReference type="HOGENOM" id="CLU_087843_3_1_9"/>
<dbReference type="OrthoDB" id="9811381at2"/>
<dbReference type="Proteomes" id="UP000000370">
    <property type="component" value="Chromosome"/>
</dbReference>
<dbReference type="GO" id="GO:0005829">
    <property type="term" value="C:cytosol"/>
    <property type="evidence" value="ECO:0007669"/>
    <property type="project" value="TreeGrafter"/>
</dbReference>
<dbReference type="GO" id="GO:0003723">
    <property type="term" value="F:RNA binding"/>
    <property type="evidence" value="ECO:0007669"/>
    <property type="project" value="UniProtKB-UniRule"/>
</dbReference>
<dbReference type="GO" id="GO:0006353">
    <property type="term" value="P:DNA-templated transcription termination"/>
    <property type="evidence" value="ECO:0007669"/>
    <property type="project" value="UniProtKB-UniRule"/>
</dbReference>
<dbReference type="GO" id="GO:0031564">
    <property type="term" value="P:transcription antitermination"/>
    <property type="evidence" value="ECO:0007669"/>
    <property type="project" value="UniProtKB-KW"/>
</dbReference>
<dbReference type="Gene3D" id="1.10.940.10">
    <property type="entry name" value="NusB-like"/>
    <property type="match status" value="1"/>
</dbReference>
<dbReference type="HAMAP" id="MF_00073">
    <property type="entry name" value="NusB"/>
    <property type="match status" value="1"/>
</dbReference>
<dbReference type="InterPro" id="IPR035926">
    <property type="entry name" value="NusB-like_sf"/>
</dbReference>
<dbReference type="InterPro" id="IPR011605">
    <property type="entry name" value="NusB_fam"/>
</dbReference>
<dbReference type="InterPro" id="IPR006027">
    <property type="entry name" value="NusB_RsmB_TIM44"/>
</dbReference>
<dbReference type="NCBIfam" id="TIGR01951">
    <property type="entry name" value="nusB"/>
    <property type="match status" value="1"/>
</dbReference>
<dbReference type="PANTHER" id="PTHR11078:SF3">
    <property type="entry name" value="ANTITERMINATION NUSB DOMAIN-CONTAINING PROTEIN"/>
    <property type="match status" value="1"/>
</dbReference>
<dbReference type="PANTHER" id="PTHR11078">
    <property type="entry name" value="N UTILIZATION SUBSTANCE PROTEIN B-RELATED"/>
    <property type="match status" value="1"/>
</dbReference>
<dbReference type="Pfam" id="PF01029">
    <property type="entry name" value="NusB"/>
    <property type="match status" value="1"/>
</dbReference>
<dbReference type="SUPFAM" id="SSF48013">
    <property type="entry name" value="NusB-like"/>
    <property type="match status" value="1"/>
</dbReference>
<organism>
    <name type="scientific">Lachnoclostridium phytofermentans (strain ATCC 700394 / DSM 18823 / ISDg)</name>
    <name type="common">Clostridium phytofermentans</name>
    <dbReference type="NCBI Taxonomy" id="357809"/>
    <lineage>
        <taxon>Bacteria</taxon>
        <taxon>Bacillati</taxon>
        <taxon>Bacillota</taxon>
        <taxon>Clostridia</taxon>
        <taxon>Lachnospirales</taxon>
        <taxon>Lachnospiraceae</taxon>
    </lineage>
</organism>
<sequence length="132" mass="15373">MTRREIREHLFRMLFRKEFHEPTELEEQVLFYFDSLESITPEQQEYLNVRFDKINEKLGEIDTILANASSGWKLNRMGKVDLNIMRLATFEIRFDDEVPVKVAINEAIELAKKYGGDSSASFVNGILAKVID</sequence>
<name>NUSB_LACP7</name>
<evidence type="ECO:0000255" key="1">
    <source>
        <dbReference type="HAMAP-Rule" id="MF_00073"/>
    </source>
</evidence>
<proteinExistence type="inferred from homology"/>
<reference key="1">
    <citation type="submission" date="2007-11" db="EMBL/GenBank/DDBJ databases">
        <title>Complete genome sequence of Clostridium phytofermentans ISDg.</title>
        <authorList>
            <person name="Leschine S.B."/>
            <person name="Warnick T.A."/>
            <person name="Blanchard J.L."/>
            <person name="Schnell D.J."/>
            <person name="Petit E.L."/>
            <person name="LaTouf W.G."/>
            <person name="Copeland A."/>
            <person name="Lucas S."/>
            <person name="Lapidus A."/>
            <person name="Barry K."/>
            <person name="Glavina del Rio T."/>
            <person name="Dalin E."/>
            <person name="Tice H."/>
            <person name="Pitluck S."/>
            <person name="Kiss H."/>
            <person name="Brettin T."/>
            <person name="Bruce D."/>
            <person name="Detter J.C."/>
            <person name="Han C."/>
            <person name="Kuske C."/>
            <person name="Schmutz J."/>
            <person name="Larimer F."/>
            <person name="Land M."/>
            <person name="Hauser L."/>
            <person name="Kyrpides N."/>
            <person name="Kim E.A."/>
            <person name="Richardson P."/>
        </authorList>
    </citation>
    <scope>NUCLEOTIDE SEQUENCE [LARGE SCALE GENOMIC DNA]</scope>
    <source>
        <strain>ATCC 700394 / DSM 18823 / ISDg</strain>
    </source>
</reference>
<accession>A9KMC2</accession>
<protein>
    <recommendedName>
        <fullName evidence="1">Transcription antitermination protein NusB</fullName>
    </recommendedName>
    <alternativeName>
        <fullName evidence="1">Antitermination factor NusB</fullName>
    </alternativeName>
</protein>
<gene>
    <name evidence="1" type="primary">nusB</name>
    <name type="ordered locus">Cphy_2515</name>
</gene>
<feature type="chain" id="PRO_1000075183" description="Transcription antitermination protein NusB">
    <location>
        <begin position="1"/>
        <end position="132"/>
    </location>
</feature>
<comment type="function">
    <text evidence="1">Involved in transcription antitermination. Required for transcription of ribosomal RNA (rRNA) genes. Binds specifically to the boxA antiterminator sequence of the ribosomal RNA (rrn) operons.</text>
</comment>
<comment type="similarity">
    <text evidence="1">Belongs to the NusB family.</text>
</comment>